<reference key="1">
    <citation type="submission" date="2008-12" db="EMBL/GenBank/DDBJ databases">
        <title>Complete sequence of chromosome of Shewanella baltica OS223.</title>
        <authorList>
            <consortium name="US DOE Joint Genome Institute"/>
            <person name="Lucas S."/>
            <person name="Copeland A."/>
            <person name="Lapidus A."/>
            <person name="Glavina del Rio T."/>
            <person name="Dalin E."/>
            <person name="Tice H."/>
            <person name="Bruce D."/>
            <person name="Goodwin L."/>
            <person name="Pitluck S."/>
            <person name="Chertkov O."/>
            <person name="Meincke L."/>
            <person name="Brettin T."/>
            <person name="Detter J.C."/>
            <person name="Han C."/>
            <person name="Kuske C.R."/>
            <person name="Larimer F."/>
            <person name="Land M."/>
            <person name="Hauser L."/>
            <person name="Kyrpides N."/>
            <person name="Ovchinnikova G."/>
            <person name="Brettar I."/>
            <person name="Rodrigues J."/>
            <person name="Konstantinidis K."/>
            <person name="Tiedje J."/>
        </authorList>
    </citation>
    <scope>NUCLEOTIDE SEQUENCE [LARGE SCALE GENOMIC DNA]</scope>
    <source>
        <strain>OS223</strain>
    </source>
</reference>
<feature type="chain" id="PRO_1000184468" description="ATP synthase subunit c">
    <location>
        <begin position="1"/>
        <end position="83"/>
    </location>
</feature>
<feature type="transmembrane region" description="Helical" evidence="1">
    <location>
        <begin position="10"/>
        <end position="30"/>
    </location>
</feature>
<feature type="transmembrane region" description="Helical" evidence="1">
    <location>
        <begin position="52"/>
        <end position="72"/>
    </location>
</feature>
<feature type="site" description="Reversibly protonated during proton transport" evidence="1">
    <location>
        <position position="60"/>
    </location>
</feature>
<accession>B8EDV5</accession>
<gene>
    <name evidence="1" type="primary">atpE</name>
    <name type="ordered locus">Sbal223_4315</name>
</gene>
<dbReference type="EMBL" id="CP001252">
    <property type="protein sequence ID" value="ACK48781.1"/>
    <property type="molecule type" value="Genomic_DNA"/>
</dbReference>
<dbReference type="RefSeq" id="WP_006083840.1">
    <property type="nucleotide sequence ID" value="NC_011663.1"/>
</dbReference>
<dbReference type="SMR" id="B8EDV5"/>
<dbReference type="GeneID" id="94725963"/>
<dbReference type="KEGG" id="sbp:Sbal223_4315"/>
<dbReference type="HOGENOM" id="CLU_148047_1_0_6"/>
<dbReference type="Proteomes" id="UP000002507">
    <property type="component" value="Chromosome"/>
</dbReference>
<dbReference type="GO" id="GO:0005886">
    <property type="term" value="C:plasma membrane"/>
    <property type="evidence" value="ECO:0007669"/>
    <property type="project" value="UniProtKB-SubCell"/>
</dbReference>
<dbReference type="GO" id="GO:0045259">
    <property type="term" value="C:proton-transporting ATP synthase complex"/>
    <property type="evidence" value="ECO:0007669"/>
    <property type="project" value="UniProtKB-KW"/>
</dbReference>
<dbReference type="GO" id="GO:0033177">
    <property type="term" value="C:proton-transporting two-sector ATPase complex, proton-transporting domain"/>
    <property type="evidence" value="ECO:0007669"/>
    <property type="project" value="InterPro"/>
</dbReference>
<dbReference type="GO" id="GO:0008289">
    <property type="term" value="F:lipid binding"/>
    <property type="evidence" value="ECO:0007669"/>
    <property type="project" value="UniProtKB-KW"/>
</dbReference>
<dbReference type="GO" id="GO:0046933">
    <property type="term" value="F:proton-transporting ATP synthase activity, rotational mechanism"/>
    <property type="evidence" value="ECO:0007669"/>
    <property type="project" value="UniProtKB-UniRule"/>
</dbReference>
<dbReference type="CDD" id="cd18185">
    <property type="entry name" value="ATP-synt_Fo_c_ATPE"/>
    <property type="match status" value="1"/>
</dbReference>
<dbReference type="FunFam" id="1.20.20.10:FF:000002">
    <property type="entry name" value="ATP synthase subunit c"/>
    <property type="match status" value="1"/>
</dbReference>
<dbReference type="Gene3D" id="1.20.20.10">
    <property type="entry name" value="F1F0 ATP synthase subunit C"/>
    <property type="match status" value="1"/>
</dbReference>
<dbReference type="HAMAP" id="MF_01396">
    <property type="entry name" value="ATP_synth_c_bact"/>
    <property type="match status" value="1"/>
</dbReference>
<dbReference type="InterPro" id="IPR005953">
    <property type="entry name" value="ATP_synth_csu_bac/chlpt"/>
</dbReference>
<dbReference type="InterPro" id="IPR000454">
    <property type="entry name" value="ATP_synth_F0_csu"/>
</dbReference>
<dbReference type="InterPro" id="IPR020537">
    <property type="entry name" value="ATP_synth_F0_csu_DDCD_BS"/>
</dbReference>
<dbReference type="InterPro" id="IPR038662">
    <property type="entry name" value="ATP_synth_F0_csu_sf"/>
</dbReference>
<dbReference type="InterPro" id="IPR002379">
    <property type="entry name" value="ATPase_proteolipid_c-like_dom"/>
</dbReference>
<dbReference type="InterPro" id="IPR035921">
    <property type="entry name" value="F/V-ATP_Csub_sf"/>
</dbReference>
<dbReference type="NCBIfam" id="TIGR01260">
    <property type="entry name" value="ATP_synt_c"/>
    <property type="match status" value="1"/>
</dbReference>
<dbReference type="NCBIfam" id="NF005363">
    <property type="entry name" value="PRK06876.1"/>
    <property type="match status" value="1"/>
</dbReference>
<dbReference type="Pfam" id="PF00137">
    <property type="entry name" value="ATP-synt_C"/>
    <property type="match status" value="1"/>
</dbReference>
<dbReference type="PRINTS" id="PR00124">
    <property type="entry name" value="ATPASEC"/>
</dbReference>
<dbReference type="SUPFAM" id="SSF81333">
    <property type="entry name" value="F1F0 ATP synthase subunit C"/>
    <property type="match status" value="1"/>
</dbReference>
<dbReference type="PROSITE" id="PS00605">
    <property type="entry name" value="ATPASE_C"/>
    <property type="match status" value="1"/>
</dbReference>
<sequence length="83" mass="8483">METILGMTAIAVALLIGMGALGTAIGFGLLGGKFLEGAARQPEMAPMLQVKMFIVAGLLDAVTMIGVGIALFMLFTNPLGAML</sequence>
<evidence type="ECO:0000255" key="1">
    <source>
        <dbReference type="HAMAP-Rule" id="MF_01396"/>
    </source>
</evidence>
<proteinExistence type="inferred from homology"/>
<organism>
    <name type="scientific">Shewanella baltica (strain OS223)</name>
    <dbReference type="NCBI Taxonomy" id="407976"/>
    <lineage>
        <taxon>Bacteria</taxon>
        <taxon>Pseudomonadati</taxon>
        <taxon>Pseudomonadota</taxon>
        <taxon>Gammaproteobacteria</taxon>
        <taxon>Alteromonadales</taxon>
        <taxon>Shewanellaceae</taxon>
        <taxon>Shewanella</taxon>
    </lineage>
</organism>
<keyword id="KW-0066">ATP synthesis</keyword>
<keyword id="KW-0997">Cell inner membrane</keyword>
<keyword id="KW-1003">Cell membrane</keyword>
<keyword id="KW-0138">CF(0)</keyword>
<keyword id="KW-0375">Hydrogen ion transport</keyword>
<keyword id="KW-0406">Ion transport</keyword>
<keyword id="KW-0446">Lipid-binding</keyword>
<keyword id="KW-0472">Membrane</keyword>
<keyword id="KW-0812">Transmembrane</keyword>
<keyword id="KW-1133">Transmembrane helix</keyword>
<keyword id="KW-0813">Transport</keyword>
<name>ATPL_SHEB2</name>
<comment type="function">
    <text evidence="1">F(1)F(0) ATP synthase produces ATP from ADP in the presence of a proton or sodium gradient. F-type ATPases consist of two structural domains, F(1) containing the extramembraneous catalytic core and F(0) containing the membrane proton channel, linked together by a central stalk and a peripheral stalk. During catalysis, ATP synthesis in the catalytic domain of F(1) is coupled via a rotary mechanism of the central stalk subunits to proton translocation.</text>
</comment>
<comment type="function">
    <text evidence="1">Key component of the F(0) channel; it plays a direct role in translocation across the membrane. A homomeric c-ring of between 10-14 subunits forms the central stalk rotor element with the F(1) delta and epsilon subunits.</text>
</comment>
<comment type="subunit">
    <text evidence="1">F-type ATPases have 2 components, F(1) - the catalytic core - and F(0) - the membrane proton channel. F(1) has five subunits: alpha(3), beta(3), gamma(1), delta(1), epsilon(1). F(0) has three main subunits: a(1), b(2) and c(10-14). The alpha and beta chains form an alternating ring which encloses part of the gamma chain. F(1) is attached to F(0) by a central stalk formed by the gamma and epsilon chains, while a peripheral stalk is formed by the delta and b chains.</text>
</comment>
<comment type="subcellular location">
    <subcellularLocation>
        <location evidence="1">Cell inner membrane</location>
        <topology evidence="1">Multi-pass membrane protein</topology>
    </subcellularLocation>
</comment>
<comment type="similarity">
    <text evidence="1">Belongs to the ATPase C chain family.</text>
</comment>
<protein>
    <recommendedName>
        <fullName evidence="1">ATP synthase subunit c</fullName>
    </recommendedName>
    <alternativeName>
        <fullName evidence="1">ATP synthase F(0) sector subunit c</fullName>
    </alternativeName>
    <alternativeName>
        <fullName evidence="1">F-type ATPase subunit c</fullName>
        <shortName evidence="1">F-ATPase subunit c</shortName>
    </alternativeName>
    <alternativeName>
        <fullName evidence="1">Lipid-binding protein</fullName>
    </alternativeName>
</protein>